<feature type="chain" id="PRO_1000204115" description="UvrABC system protein C">
    <location>
        <begin position="1"/>
        <end position="693"/>
    </location>
</feature>
<feature type="domain" description="GIY-YIG" evidence="1">
    <location>
        <begin position="16"/>
        <end position="95"/>
    </location>
</feature>
<feature type="domain" description="UVR" evidence="1">
    <location>
        <begin position="208"/>
        <end position="243"/>
    </location>
</feature>
<feature type="region of interest" description="Disordered" evidence="2">
    <location>
        <begin position="656"/>
        <end position="693"/>
    </location>
</feature>
<feature type="compositionally biased region" description="Low complexity" evidence="2">
    <location>
        <begin position="672"/>
        <end position="693"/>
    </location>
</feature>
<comment type="function">
    <text evidence="1">The UvrABC repair system catalyzes the recognition and processing of DNA lesions. UvrC both incises the 5' and 3' sides of the lesion. The N-terminal half is responsible for the 3' incision and the C-terminal half is responsible for the 5' incision.</text>
</comment>
<comment type="subunit">
    <text evidence="1">Interacts with UvrB in an incision complex.</text>
</comment>
<comment type="subcellular location">
    <subcellularLocation>
        <location evidence="1">Cytoplasm</location>
    </subcellularLocation>
</comment>
<comment type="similarity">
    <text evidence="1">Belongs to the UvrC family.</text>
</comment>
<evidence type="ECO:0000255" key="1">
    <source>
        <dbReference type="HAMAP-Rule" id="MF_00203"/>
    </source>
</evidence>
<evidence type="ECO:0000256" key="2">
    <source>
        <dbReference type="SAM" id="MobiDB-lite"/>
    </source>
</evidence>
<accession>C5BV40</accession>
<gene>
    <name evidence="1" type="primary">uvrC</name>
    <name type="ordered locus">Bcav_2175</name>
</gene>
<name>UVRC_BEUC1</name>
<protein>
    <recommendedName>
        <fullName evidence="1">UvrABC system protein C</fullName>
        <shortName evidence="1">Protein UvrC</shortName>
    </recommendedName>
    <alternativeName>
        <fullName evidence="1">Excinuclease ABC subunit C</fullName>
    </alternativeName>
</protein>
<reference key="1">
    <citation type="journal article" date="2009" name="Stand. Genomic Sci.">
        <title>Complete genome sequence of Beutenbergia cavernae type strain (HKI 0122).</title>
        <authorList>
            <person name="Land M."/>
            <person name="Pukall R."/>
            <person name="Abt B."/>
            <person name="Goker M."/>
            <person name="Rohde M."/>
            <person name="Glavina Del Rio T."/>
            <person name="Tice H."/>
            <person name="Copeland A."/>
            <person name="Cheng J.F."/>
            <person name="Lucas S."/>
            <person name="Chen F."/>
            <person name="Nolan M."/>
            <person name="Bruce D."/>
            <person name="Goodwin L."/>
            <person name="Pitluck S."/>
            <person name="Ivanova N."/>
            <person name="Mavromatis K."/>
            <person name="Ovchinnikova G."/>
            <person name="Pati A."/>
            <person name="Chen A."/>
            <person name="Palaniappan K."/>
            <person name="Hauser L."/>
            <person name="Chang Y.J."/>
            <person name="Jefferies C.C."/>
            <person name="Saunders E."/>
            <person name="Brettin T."/>
            <person name="Detter J.C."/>
            <person name="Han C."/>
            <person name="Chain P."/>
            <person name="Bristow J."/>
            <person name="Eisen J.A."/>
            <person name="Markowitz V."/>
            <person name="Hugenholtz P."/>
            <person name="Kyrpides N.C."/>
            <person name="Klenk H.P."/>
            <person name="Lapidus A."/>
        </authorList>
    </citation>
    <scope>NUCLEOTIDE SEQUENCE [LARGE SCALE GENOMIC DNA]</scope>
    <source>
        <strain>ATCC BAA-8 / DSM 12333 / CCUG 43141 / JCM 11478 / NBRC 16432 / NCIMB 13614 / HKI 0122</strain>
    </source>
</reference>
<proteinExistence type="inferred from homology"/>
<dbReference type="EMBL" id="CP001618">
    <property type="protein sequence ID" value="ACQ80427.1"/>
    <property type="molecule type" value="Genomic_DNA"/>
</dbReference>
<dbReference type="RefSeq" id="WP_015882667.1">
    <property type="nucleotide sequence ID" value="NC_012669.1"/>
</dbReference>
<dbReference type="SMR" id="C5BV40"/>
<dbReference type="STRING" id="471853.Bcav_2175"/>
<dbReference type="KEGG" id="bcv:Bcav_2175"/>
<dbReference type="eggNOG" id="COG0322">
    <property type="taxonomic scope" value="Bacteria"/>
</dbReference>
<dbReference type="HOGENOM" id="CLU_014841_3_2_11"/>
<dbReference type="OrthoDB" id="9804933at2"/>
<dbReference type="Proteomes" id="UP000007962">
    <property type="component" value="Chromosome"/>
</dbReference>
<dbReference type="GO" id="GO:0005737">
    <property type="term" value="C:cytoplasm"/>
    <property type="evidence" value="ECO:0007669"/>
    <property type="project" value="UniProtKB-SubCell"/>
</dbReference>
<dbReference type="GO" id="GO:0009380">
    <property type="term" value="C:excinuclease repair complex"/>
    <property type="evidence" value="ECO:0007669"/>
    <property type="project" value="InterPro"/>
</dbReference>
<dbReference type="GO" id="GO:0003677">
    <property type="term" value="F:DNA binding"/>
    <property type="evidence" value="ECO:0007669"/>
    <property type="project" value="UniProtKB-UniRule"/>
</dbReference>
<dbReference type="GO" id="GO:0009381">
    <property type="term" value="F:excinuclease ABC activity"/>
    <property type="evidence" value="ECO:0007669"/>
    <property type="project" value="UniProtKB-UniRule"/>
</dbReference>
<dbReference type="GO" id="GO:0006289">
    <property type="term" value="P:nucleotide-excision repair"/>
    <property type="evidence" value="ECO:0007669"/>
    <property type="project" value="UniProtKB-UniRule"/>
</dbReference>
<dbReference type="GO" id="GO:0009432">
    <property type="term" value="P:SOS response"/>
    <property type="evidence" value="ECO:0007669"/>
    <property type="project" value="UniProtKB-UniRule"/>
</dbReference>
<dbReference type="CDD" id="cd10434">
    <property type="entry name" value="GIY-YIG_UvrC_Cho"/>
    <property type="match status" value="1"/>
</dbReference>
<dbReference type="FunFam" id="3.40.1440.10:FF:000001">
    <property type="entry name" value="UvrABC system protein C"/>
    <property type="match status" value="1"/>
</dbReference>
<dbReference type="Gene3D" id="1.10.150.20">
    <property type="entry name" value="5' to 3' exonuclease, C-terminal subdomain"/>
    <property type="match status" value="1"/>
</dbReference>
<dbReference type="Gene3D" id="3.40.1440.10">
    <property type="entry name" value="GIY-YIG endonuclease"/>
    <property type="match status" value="1"/>
</dbReference>
<dbReference type="Gene3D" id="4.10.860.10">
    <property type="entry name" value="UVR domain"/>
    <property type="match status" value="1"/>
</dbReference>
<dbReference type="Gene3D" id="3.30.420.340">
    <property type="entry name" value="UvrC, RNAse H endonuclease domain"/>
    <property type="match status" value="1"/>
</dbReference>
<dbReference type="HAMAP" id="MF_00203">
    <property type="entry name" value="UvrC"/>
    <property type="match status" value="1"/>
</dbReference>
<dbReference type="InterPro" id="IPR000305">
    <property type="entry name" value="GIY-YIG_endonuc"/>
</dbReference>
<dbReference type="InterPro" id="IPR035901">
    <property type="entry name" value="GIY-YIG_endonuc_sf"/>
</dbReference>
<dbReference type="InterPro" id="IPR047296">
    <property type="entry name" value="GIY-YIG_UvrC_Cho"/>
</dbReference>
<dbReference type="InterPro" id="IPR003583">
    <property type="entry name" value="Hlx-hairpin-Hlx_DNA-bd_motif"/>
</dbReference>
<dbReference type="InterPro" id="IPR010994">
    <property type="entry name" value="RuvA_2-like"/>
</dbReference>
<dbReference type="InterPro" id="IPR001943">
    <property type="entry name" value="UVR_dom"/>
</dbReference>
<dbReference type="InterPro" id="IPR036876">
    <property type="entry name" value="UVR_dom_sf"/>
</dbReference>
<dbReference type="InterPro" id="IPR050066">
    <property type="entry name" value="UvrABC_protein_C"/>
</dbReference>
<dbReference type="InterPro" id="IPR004791">
    <property type="entry name" value="UvrC"/>
</dbReference>
<dbReference type="InterPro" id="IPR001162">
    <property type="entry name" value="UvrC_RNase_H_dom"/>
</dbReference>
<dbReference type="InterPro" id="IPR038476">
    <property type="entry name" value="UvrC_RNase_H_dom_sf"/>
</dbReference>
<dbReference type="NCBIfam" id="NF001824">
    <property type="entry name" value="PRK00558.1-5"/>
    <property type="match status" value="1"/>
</dbReference>
<dbReference type="NCBIfam" id="TIGR00194">
    <property type="entry name" value="uvrC"/>
    <property type="match status" value="1"/>
</dbReference>
<dbReference type="PANTHER" id="PTHR30562:SF1">
    <property type="entry name" value="UVRABC SYSTEM PROTEIN C"/>
    <property type="match status" value="1"/>
</dbReference>
<dbReference type="PANTHER" id="PTHR30562">
    <property type="entry name" value="UVRC/OXIDOREDUCTASE"/>
    <property type="match status" value="1"/>
</dbReference>
<dbReference type="Pfam" id="PF01541">
    <property type="entry name" value="GIY-YIG"/>
    <property type="match status" value="1"/>
</dbReference>
<dbReference type="Pfam" id="PF14520">
    <property type="entry name" value="HHH_5"/>
    <property type="match status" value="1"/>
</dbReference>
<dbReference type="Pfam" id="PF02151">
    <property type="entry name" value="UVR"/>
    <property type="match status" value="1"/>
</dbReference>
<dbReference type="Pfam" id="PF22920">
    <property type="entry name" value="UvrC_RNaseH"/>
    <property type="match status" value="1"/>
</dbReference>
<dbReference type="Pfam" id="PF08459">
    <property type="entry name" value="UvrC_RNaseH_dom"/>
    <property type="match status" value="1"/>
</dbReference>
<dbReference type="SMART" id="SM00465">
    <property type="entry name" value="GIYc"/>
    <property type="match status" value="1"/>
</dbReference>
<dbReference type="SMART" id="SM00278">
    <property type="entry name" value="HhH1"/>
    <property type="match status" value="2"/>
</dbReference>
<dbReference type="SUPFAM" id="SSF46600">
    <property type="entry name" value="C-terminal UvrC-binding domain of UvrB"/>
    <property type="match status" value="1"/>
</dbReference>
<dbReference type="SUPFAM" id="SSF82771">
    <property type="entry name" value="GIY-YIG endonuclease"/>
    <property type="match status" value="1"/>
</dbReference>
<dbReference type="SUPFAM" id="SSF47781">
    <property type="entry name" value="RuvA domain 2-like"/>
    <property type="match status" value="1"/>
</dbReference>
<dbReference type="PROSITE" id="PS50164">
    <property type="entry name" value="GIY_YIG"/>
    <property type="match status" value="1"/>
</dbReference>
<dbReference type="PROSITE" id="PS50151">
    <property type="entry name" value="UVR"/>
    <property type="match status" value="1"/>
</dbReference>
<dbReference type="PROSITE" id="PS50165">
    <property type="entry name" value="UVRC"/>
    <property type="match status" value="1"/>
</dbReference>
<sequence length="693" mass="75654">MADPTTYRPRPGEIPDAPGVYRFRDPHGRVVYVGKAKSLRSRLSSYFQDLSALHPRTQQMVTTASSVEWTVVGTEVEALQLEYSWIKEFDPRFNVKYRDDKSYPYLAVTMGEEVPRVQVMRGAKRKGTRYFGPYGHAWAIRETVDLLLRVFPVRTCSSGVYKRAAASGRPCLLGYIDKCSAPCVGRISVEDHRDLAEDFCSFMAGESGVFLRRLESEMAAASAELDFERAARVRDDINALRRVVEKNAVVLADGTDADVFALAADELEVSVQVFHVRGGRVRGQRGWVTERVEDLDDGALVERLLQQVYGPYATEKGPDGGATGVPREVLVPALPDDAVELAEWLSTLRGSRVSLRIPQRGEKRALAETVRTNAQQALALHKTRRAGDLTSRSRALSELQEELGLAESPLRIECYDISTLQGTHQVGSMVVFEDGLARKSEYRQFVVRGADGQGARDDTEAMHEVITRRFRRYLAQRDVGVAGGGSGEVPAEDDDGVAIAGPVDPETGRPARFAYPPNLVVVDGGPPQVAAAQRALDELGVSDVALVGLAKRLEEVWLPGEEYPLVLPRASEGLYLLQRVRDEAHRFAITHHRKRRGKSMTRSTLDDVPGLGPSRQAALLQAFGSVRRIRAATPEEIAAVPGFGRRTAEQVLAALAPSPDDATTEPGAVGEPGTADGAAADPDGRDAVVVPEG</sequence>
<organism>
    <name type="scientific">Beutenbergia cavernae (strain ATCC BAA-8 / DSM 12333 / CCUG 43141 / JCM 11478 / NBRC 16432 / NCIMB 13614 / HKI 0122)</name>
    <dbReference type="NCBI Taxonomy" id="471853"/>
    <lineage>
        <taxon>Bacteria</taxon>
        <taxon>Bacillati</taxon>
        <taxon>Actinomycetota</taxon>
        <taxon>Actinomycetes</taxon>
        <taxon>Micrococcales</taxon>
        <taxon>Beutenbergiaceae</taxon>
        <taxon>Beutenbergia</taxon>
    </lineage>
</organism>
<keyword id="KW-0963">Cytoplasm</keyword>
<keyword id="KW-0227">DNA damage</keyword>
<keyword id="KW-0228">DNA excision</keyword>
<keyword id="KW-0234">DNA repair</keyword>
<keyword id="KW-0267">Excision nuclease</keyword>
<keyword id="KW-1185">Reference proteome</keyword>
<keyword id="KW-0742">SOS response</keyword>